<keyword id="KW-0496">Mitochondrion</keyword>
<keyword id="KW-0809">Transit peptide</keyword>
<dbReference type="EMBL" id="AB583698">
    <property type="protein sequence ID" value="BAJ84580.1"/>
    <property type="molecule type" value="Genomic_DNA"/>
</dbReference>
<dbReference type="EMBL" id="AB583699">
    <property type="protein sequence ID" value="BAJ84581.1"/>
    <property type="molecule type" value="Genomic_DNA"/>
</dbReference>
<dbReference type="SMR" id="F1SZ42"/>
<dbReference type="GO" id="GO:0005739">
    <property type="term" value="C:mitochondrion"/>
    <property type="evidence" value="ECO:0000314"/>
    <property type="project" value="UniProtKB"/>
</dbReference>
<dbReference type="InterPro" id="IPR040299">
    <property type="entry name" value="RF2K-like"/>
</dbReference>
<dbReference type="PANTHER" id="PTHR34938">
    <property type="entry name" value="PROTEIN FERTILITY RESTORER RF2, MITOCHONDRIAL"/>
    <property type="match status" value="1"/>
</dbReference>
<dbReference type="PANTHER" id="PTHR34938:SF1">
    <property type="entry name" value="PROTEIN FERTILITY RESTORER RF2, MITOCHONDRIAL"/>
    <property type="match status" value="1"/>
</dbReference>
<name>RF2F_ORYSJ</name>
<accession>F1SZ42</accession>
<proteinExistence type="evidence at transcript level"/>
<gene>
    <name evidence="4" type="primary">RF2</name>
</gene>
<feature type="transit peptide" description="Mitochondrion" evidence="1">
    <location>
        <begin position="1"/>
        <end position="52"/>
    </location>
</feature>
<feature type="chain" id="PRO_0000445236" description="Protein FERTILITY RESTORER RF2, mitochondrial">
    <location>
        <begin position="53"/>
        <end position="152"/>
    </location>
</feature>
<feature type="region of interest" description="Disordered" evidence="2">
    <location>
        <begin position="52"/>
        <end position="99"/>
    </location>
</feature>
<feature type="compositionally biased region" description="Polar residues" evidence="2">
    <location>
        <begin position="52"/>
        <end position="69"/>
    </location>
</feature>
<sequence>MSTLVTCSLPGAVTTHASTRRFGGSQFQTSQASCISFKREVSAKAVLRSVRCNATQTQSAQRKSSTATVKRSDPKGKIQGPKLDDGSGGFPPFRFGKGGGGGGGGGGGSNYFGGFLLFTCVLLLDYLKEFEKNLIARRQRAGYDANNDMFQQ</sequence>
<comment type="function">
    <text evidence="3">Restores fertility in rice varieties with LD-type cytoplasmic male sterility (CMS) (PubMed:21265890). CMS is caused by genetic incompatibility between nuclei and mitochondria within male reproductive organs (PubMed:21265890). Corresponds to the functional allele of RF2, which is dependent of the presence of Ile-78 in the japonica cultivars Fukuyama and Owarihatamochi (AC F1SZ42), and indica cultivar Kasalath (AC F1SZ41) (PubMed:21265890). Non-functional RF2 alleles are found in japonica cultivars Taichung 65 and Nipponbare (AC F1SZ44), where Ile-78 is replaced by Thr-78 (PubMed:21265890).</text>
</comment>
<comment type="subcellular location">
    <subcellularLocation>
        <location evidence="3">Mitochondrion</location>
    </subcellularLocation>
</comment>
<comment type="developmental stage">
    <text evidence="3">Specifically expressed during anther development, from the uninucleate pollen stage to the tricellular pollen stage, with the highest expression at the tricellular pollen stage.</text>
</comment>
<protein>
    <recommendedName>
        <fullName evidence="5">Protein FERTILITY RESTORER RF2, mitochondrial</fullName>
    </recommendedName>
</protein>
<organism>
    <name type="scientific">Oryza sativa subsp. japonica</name>
    <name type="common">Rice</name>
    <dbReference type="NCBI Taxonomy" id="39947"/>
    <lineage>
        <taxon>Eukaryota</taxon>
        <taxon>Viridiplantae</taxon>
        <taxon>Streptophyta</taxon>
        <taxon>Embryophyta</taxon>
        <taxon>Tracheophyta</taxon>
        <taxon>Spermatophyta</taxon>
        <taxon>Magnoliopsida</taxon>
        <taxon>Liliopsida</taxon>
        <taxon>Poales</taxon>
        <taxon>Poaceae</taxon>
        <taxon>BOP clade</taxon>
        <taxon>Oryzoideae</taxon>
        <taxon>Oryzeae</taxon>
        <taxon>Oryzinae</taxon>
        <taxon>Oryza</taxon>
        <taxon>Oryza sativa</taxon>
    </lineage>
</organism>
<evidence type="ECO:0000255" key="1"/>
<evidence type="ECO:0000256" key="2">
    <source>
        <dbReference type="SAM" id="MobiDB-lite"/>
    </source>
</evidence>
<evidence type="ECO:0000269" key="3">
    <source>
    </source>
</evidence>
<evidence type="ECO:0000303" key="4">
    <source>
    </source>
</evidence>
<evidence type="ECO:0000305" key="5"/>
<reference key="1">
    <citation type="journal article" date="2011" name="Plant J.">
        <title>The fertility restorer gene, Rf2, for Lead Rice-type cytoplasmic male sterility of rice encodes a mitochondrial glycine-rich protein.</title>
        <authorList>
            <person name="Itabashi E."/>
            <person name="Iwata N."/>
            <person name="Fujii S."/>
            <person name="Kazama T."/>
            <person name="Toriyama K."/>
        </authorList>
    </citation>
    <scope>NUCLEOTIDE SEQUENCE [GENOMIC DNA]</scope>
    <scope>FUNCTION</scope>
    <scope>SUBCELLULAR LOCATION</scope>
    <scope>DEVELOPMENTAL STAGE</scope>
    <source>
        <strain>cv. Fukuyama</strain>
        <strain>cv. Owarihatamochi</strain>
    </source>
</reference>